<protein>
    <recommendedName>
        <fullName>Putative L-ascorbate peroxidase 6</fullName>
        <shortName>AtAPx08</shortName>
        <ecNumber>1.11.1.11</ecNumber>
    </recommendedName>
</protein>
<gene>
    <name type="primary">APX6</name>
    <name type="ordered locus">At4g32320</name>
    <name type="ORF">F10M6.50</name>
    <name type="ORF">F8B4.20</name>
</gene>
<sequence length="329" mass="36240">MTTTTASLVKTFLFRCDSFSSFKFKCKFESPAKTRLLSPATEKHVVRSSRAWRIRCLSDDPGSSHVFVASRRKMVVLLSTVQLLSHMLPQNGNAAEIYPVMQNEIRKVVTKGKAAGVLRLVFHDAGTFELDDHSGGINGSIAYELERPENIGLKKSLKVLAKAKVKVDEIQPVSWADMISVAGSEAVSICGGPTIPVVLGRLDSAQPDPEGKLPPETLSASGLKECFKRKGFSTQELVALSGAHTIGSKGFGDPTVFDNAYYKILLEKPWTSTSKMTSMVGLPSDHALVQDDECLRWVKRYAEDQDKFFEDFTNAYIKLVNSGAKWNML</sequence>
<comment type="function">
    <text evidence="1">Plays a key role in hydrogen peroxide removal.</text>
</comment>
<comment type="catalytic activity">
    <reaction>
        <text>L-ascorbate + H2O2 = L-dehydroascorbate + 2 H2O</text>
        <dbReference type="Rhea" id="RHEA:22996"/>
        <dbReference type="ChEBI" id="CHEBI:15377"/>
        <dbReference type="ChEBI" id="CHEBI:16240"/>
        <dbReference type="ChEBI" id="CHEBI:38290"/>
        <dbReference type="ChEBI" id="CHEBI:58539"/>
        <dbReference type="EC" id="1.11.1.11"/>
    </reaction>
</comment>
<comment type="cofactor">
    <cofactor>
        <name>heme b</name>
        <dbReference type="ChEBI" id="CHEBI:60344"/>
    </cofactor>
    <text>Binds 1 heme b (iron(II)-protoporphyrin IX) group per subunit.</text>
</comment>
<comment type="similarity">
    <text evidence="4">Belongs to the peroxidase family. Ascorbate peroxidase subfamily.</text>
</comment>
<comment type="sequence caution" evidence="4">
    <conflict type="erroneous gene model prediction">
        <sequence resource="EMBL-CDS" id="CAA16959"/>
    </conflict>
</comment>
<comment type="sequence caution" evidence="4">
    <conflict type="erroneous gene model prediction">
        <sequence resource="EMBL-CDS" id="CAA22559"/>
    </conflict>
</comment>
<comment type="sequence caution" evidence="4">
    <conflict type="erroneous gene model prediction">
        <sequence resource="EMBL-CDS" id="CAB79949"/>
    </conflict>
</comment>
<reference key="1">
    <citation type="journal article" date="1999" name="Nature">
        <title>Sequence and analysis of chromosome 4 of the plant Arabidopsis thaliana.</title>
        <authorList>
            <person name="Mayer K.F.X."/>
            <person name="Schueller C."/>
            <person name="Wambutt R."/>
            <person name="Murphy G."/>
            <person name="Volckaert G."/>
            <person name="Pohl T."/>
            <person name="Duesterhoeft A."/>
            <person name="Stiekema W."/>
            <person name="Entian K.-D."/>
            <person name="Terryn N."/>
            <person name="Harris B."/>
            <person name="Ansorge W."/>
            <person name="Brandt P."/>
            <person name="Grivell L.A."/>
            <person name="Rieger M."/>
            <person name="Weichselgartner M."/>
            <person name="de Simone V."/>
            <person name="Obermaier B."/>
            <person name="Mache R."/>
            <person name="Mueller M."/>
            <person name="Kreis M."/>
            <person name="Delseny M."/>
            <person name="Puigdomenech P."/>
            <person name="Watson M."/>
            <person name="Schmidtheini T."/>
            <person name="Reichert B."/>
            <person name="Portetelle D."/>
            <person name="Perez-Alonso M."/>
            <person name="Boutry M."/>
            <person name="Bancroft I."/>
            <person name="Vos P."/>
            <person name="Hoheisel J."/>
            <person name="Zimmermann W."/>
            <person name="Wedler H."/>
            <person name="Ridley P."/>
            <person name="Langham S.-A."/>
            <person name="McCullagh B."/>
            <person name="Bilham L."/>
            <person name="Robben J."/>
            <person name="van der Schueren J."/>
            <person name="Grymonprez B."/>
            <person name="Chuang Y.-J."/>
            <person name="Vandenbussche F."/>
            <person name="Braeken M."/>
            <person name="Weltjens I."/>
            <person name="Voet M."/>
            <person name="Bastiaens I."/>
            <person name="Aert R."/>
            <person name="Defoor E."/>
            <person name="Weitzenegger T."/>
            <person name="Bothe G."/>
            <person name="Ramsperger U."/>
            <person name="Hilbert H."/>
            <person name="Braun M."/>
            <person name="Holzer E."/>
            <person name="Brandt A."/>
            <person name="Peters S."/>
            <person name="van Staveren M."/>
            <person name="Dirkse W."/>
            <person name="Mooijman P."/>
            <person name="Klein Lankhorst R."/>
            <person name="Rose M."/>
            <person name="Hauf J."/>
            <person name="Koetter P."/>
            <person name="Berneiser S."/>
            <person name="Hempel S."/>
            <person name="Feldpausch M."/>
            <person name="Lamberth S."/>
            <person name="Van den Daele H."/>
            <person name="De Keyser A."/>
            <person name="Buysshaert C."/>
            <person name="Gielen J."/>
            <person name="Villarroel R."/>
            <person name="De Clercq R."/>
            <person name="van Montagu M."/>
            <person name="Rogers J."/>
            <person name="Cronin A."/>
            <person name="Quail M.A."/>
            <person name="Bray-Allen S."/>
            <person name="Clark L."/>
            <person name="Doggett J."/>
            <person name="Hall S."/>
            <person name="Kay M."/>
            <person name="Lennard N."/>
            <person name="McLay K."/>
            <person name="Mayes R."/>
            <person name="Pettett A."/>
            <person name="Rajandream M.A."/>
            <person name="Lyne M."/>
            <person name="Benes V."/>
            <person name="Rechmann S."/>
            <person name="Borkova D."/>
            <person name="Bloecker H."/>
            <person name="Scharfe M."/>
            <person name="Grimm M."/>
            <person name="Loehnert T.-H."/>
            <person name="Dose S."/>
            <person name="de Haan M."/>
            <person name="Maarse A.C."/>
            <person name="Schaefer M."/>
            <person name="Mueller-Auer S."/>
            <person name="Gabel C."/>
            <person name="Fuchs M."/>
            <person name="Fartmann B."/>
            <person name="Granderath K."/>
            <person name="Dauner D."/>
            <person name="Herzl A."/>
            <person name="Neumann S."/>
            <person name="Argiriou A."/>
            <person name="Vitale D."/>
            <person name="Liguori R."/>
            <person name="Piravandi E."/>
            <person name="Massenet O."/>
            <person name="Quigley F."/>
            <person name="Clabauld G."/>
            <person name="Muendlein A."/>
            <person name="Felber R."/>
            <person name="Schnabl S."/>
            <person name="Hiller R."/>
            <person name="Schmidt W."/>
            <person name="Lecharny A."/>
            <person name="Aubourg S."/>
            <person name="Chefdor F."/>
            <person name="Cooke R."/>
            <person name="Berger C."/>
            <person name="Monfort A."/>
            <person name="Casacuberta E."/>
            <person name="Gibbons T."/>
            <person name="Weber N."/>
            <person name="Vandenbol M."/>
            <person name="Bargues M."/>
            <person name="Terol J."/>
            <person name="Torres A."/>
            <person name="Perez-Perez A."/>
            <person name="Purnelle B."/>
            <person name="Bent E."/>
            <person name="Johnson S."/>
            <person name="Tacon D."/>
            <person name="Jesse T."/>
            <person name="Heijnen L."/>
            <person name="Schwarz S."/>
            <person name="Scholler P."/>
            <person name="Heber S."/>
            <person name="Francs P."/>
            <person name="Bielke C."/>
            <person name="Frishman D."/>
            <person name="Haase D."/>
            <person name="Lemcke K."/>
            <person name="Mewes H.-W."/>
            <person name="Stocker S."/>
            <person name="Zaccaria P."/>
            <person name="Bevan M."/>
            <person name="Wilson R.K."/>
            <person name="de la Bastide M."/>
            <person name="Habermann K."/>
            <person name="Parnell L."/>
            <person name="Dedhia N."/>
            <person name="Gnoj L."/>
            <person name="Schutz K."/>
            <person name="Huang E."/>
            <person name="Spiegel L."/>
            <person name="Sekhon M."/>
            <person name="Murray J."/>
            <person name="Sheet P."/>
            <person name="Cordes M."/>
            <person name="Abu-Threideh J."/>
            <person name="Stoneking T."/>
            <person name="Kalicki J."/>
            <person name="Graves T."/>
            <person name="Harmon G."/>
            <person name="Edwards J."/>
            <person name="Latreille P."/>
            <person name="Courtney L."/>
            <person name="Cloud J."/>
            <person name="Abbott A."/>
            <person name="Scott K."/>
            <person name="Johnson D."/>
            <person name="Minx P."/>
            <person name="Bentley D."/>
            <person name="Fulton B."/>
            <person name="Miller N."/>
            <person name="Greco T."/>
            <person name="Kemp K."/>
            <person name="Kramer J."/>
            <person name="Fulton L."/>
            <person name="Mardis E."/>
            <person name="Dante M."/>
            <person name="Pepin K."/>
            <person name="Hillier L.W."/>
            <person name="Nelson J."/>
            <person name="Spieth J."/>
            <person name="Ryan E."/>
            <person name="Andrews S."/>
            <person name="Geisel C."/>
            <person name="Layman D."/>
            <person name="Du H."/>
            <person name="Ali J."/>
            <person name="Berghoff A."/>
            <person name="Jones K."/>
            <person name="Drone K."/>
            <person name="Cotton M."/>
            <person name="Joshu C."/>
            <person name="Antonoiu B."/>
            <person name="Zidanic M."/>
            <person name="Strong C."/>
            <person name="Sun H."/>
            <person name="Lamar B."/>
            <person name="Yordan C."/>
            <person name="Ma P."/>
            <person name="Zhong J."/>
            <person name="Preston R."/>
            <person name="Vil D."/>
            <person name="Shekher M."/>
            <person name="Matero A."/>
            <person name="Shah R."/>
            <person name="Swaby I.K."/>
            <person name="O'Shaughnessy A."/>
            <person name="Rodriguez M."/>
            <person name="Hoffman J."/>
            <person name="Till S."/>
            <person name="Granat S."/>
            <person name="Shohdy N."/>
            <person name="Hasegawa A."/>
            <person name="Hameed A."/>
            <person name="Lodhi M."/>
            <person name="Johnson A."/>
            <person name="Chen E."/>
            <person name="Marra M.A."/>
            <person name="Martienssen R."/>
            <person name="McCombie W.R."/>
        </authorList>
    </citation>
    <scope>NUCLEOTIDE SEQUENCE [LARGE SCALE GENOMIC DNA]</scope>
    <source>
        <strain>cv. Columbia</strain>
    </source>
</reference>
<reference key="2">
    <citation type="journal article" date="2017" name="Plant J.">
        <title>Araport11: a complete reannotation of the Arabidopsis thaliana reference genome.</title>
        <authorList>
            <person name="Cheng C.Y."/>
            <person name="Krishnakumar V."/>
            <person name="Chan A.P."/>
            <person name="Thibaud-Nissen F."/>
            <person name="Schobel S."/>
            <person name="Town C.D."/>
        </authorList>
    </citation>
    <scope>GENOME REANNOTATION</scope>
    <source>
        <strain>cv. Columbia</strain>
    </source>
</reference>
<reference key="3">
    <citation type="journal article" date="2002" name="Science">
        <title>Functional annotation of a full-length Arabidopsis cDNA collection.</title>
        <authorList>
            <person name="Seki M."/>
            <person name="Narusaka M."/>
            <person name="Kamiya A."/>
            <person name="Ishida J."/>
            <person name="Satou M."/>
            <person name="Sakurai T."/>
            <person name="Nakajima M."/>
            <person name="Enju A."/>
            <person name="Akiyama K."/>
            <person name="Oono Y."/>
            <person name="Muramatsu M."/>
            <person name="Hayashizaki Y."/>
            <person name="Kawai J."/>
            <person name="Carninci P."/>
            <person name="Itoh M."/>
            <person name="Ishii Y."/>
            <person name="Arakawa T."/>
            <person name="Shibata K."/>
            <person name="Shinagawa A."/>
            <person name="Shinozaki K."/>
        </authorList>
    </citation>
    <scope>NUCLEOTIDE SEQUENCE [LARGE SCALE MRNA]</scope>
    <source>
        <strain>cv. Columbia</strain>
    </source>
</reference>
<reference key="4">
    <citation type="journal article" date="2003" name="Science">
        <title>Empirical analysis of transcriptional activity in the Arabidopsis genome.</title>
        <authorList>
            <person name="Yamada K."/>
            <person name="Lim J."/>
            <person name="Dale J.M."/>
            <person name="Chen H."/>
            <person name="Shinn P."/>
            <person name="Palm C.J."/>
            <person name="Southwick A.M."/>
            <person name="Wu H.C."/>
            <person name="Kim C.J."/>
            <person name="Nguyen M."/>
            <person name="Pham P.K."/>
            <person name="Cheuk R.F."/>
            <person name="Karlin-Newmann G."/>
            <person name="Liu S.X."/>
            <person name="Lam B."/>
            <person name="Sakano H."/>
            <person name="Wu T."/>
            <person name="Yu G."/>
            <person name="Miranda M."/>
            <person name="Quach H.L."/>
            <person name="Tripp M."/>
            <person name="Chang C.H."/>
            <person name="Lee J.M."/>
            <person name="Toriumi M.J."/>
            <person name="Chan M.M."/>
            <person name="Tang C.C."/>
            <person name="Onodera C.S."/>
            <person name="Deng J.M."/>
            <person name="Akiyama K."/>
            <person name="Ansari Y."/>
            <person name="Arakawa T."/>
            <person name="Banh J."/>
            <person name="Banno F."/>
            <person name="Bowser L."/>
            <person name="Brooks S.Y."/>
            <person name="Carninci P."/>
            <person name="Chao Q."/>
            <person name="Choy N."/>
            <person name="Enju A."/>
            <person name="Goldsmith A.D."/>
            <person name="Gurjal M."/>
            <person name="Hansen N.F."/>
            <person name="Hayashizaki Y."/>
            <person name="Johnson-Hopson C."/>
            <person name="Hsuan V.W."/>
            <person name="Iida K."/>
            <person name="Karnes M."/>
            <person name="Khan S."/>
            <person name="Koesema E."/>
            <person name="Ishida J."/>
            <person name="Jiang P.X."/>
            <person name="Jones T."/>
            <person name="Kawai J."/>
            <person name="Kamiya A."/>
            <person name="Meyers C."/>
            <person name="Nakajima M."/>
            <person name="Narusaka M."/>
            <person name="Seki M."/>
            <person name="Sakurai T."/>
            <person name="Satou M."/>
            <person name="Tamse R."/>
            <person name="Vaysberg M."/>
            <person name="Wallender E.K."/>
            <person name="Wong C."/>
            <person name="Yamamura Y."/>
            <person name="Yuan S."/>
            <person name="Shinozaki K."/>
            <person name="Davis R.W."/>
            <person name="Theologis A."/>
            <person name="Ecker J.R."/>
        </authorList>
    </citation>
    <scope>NUCLEOTIDE SEQUENCE [LARGE SCALE MRNA]</scope>
    <source>
        <strain>cv. Columbia</strain>
    </source>
</reference>
<proteinExistence type="evidence at transcript level"/>
<keyword id="KW-0349">Heme</keyword>
<keyword id="KW-0376">Hydrogen peroxide</keyword>
<keyword id="KW-0408">Iron</keyword>
<keyword id="KW-0479">Metal-binding</keyword>
<keyword id="KW-0560">Oxidoreductase</keyword>
<keyword id="KW-0575">Peroxidase</keyword>
<keyword id="KW-1185">Reference proteome</keyword>
<accession>Q8GY91</accession>
<accession>O49360</accession>
<evidence type="ECO:0000250" key="1"/>
<evidence type="ECO:0000255" key="2">
    <source>
        <dbReference type="PROSITE-ProRule" id="PRU00297"/>
    </source>
</evidence>
<evidence type="ECO:0000255" key="3">
    <source>
        <dbReference type="PROSITE-ProRule" id="PRU10012"/>
    </source>
</evidence>
<evidence type="ECO:0000305" key="4"/>
<name>APX6_ARATH</name>
<organism>
    <name type="scientific">Arabidopsis thaliana</name>
    <name type="common">Mouse-ear cress</name>
    <dbReference type="NCBI Taxonomy" id="3702"/>
    <lineage>
        <taxon>Eukaryota</taxon>
        <taxon>Viridiplantae</taxon>
        <taxon>Streptophyta</taxon>
        <taxon>Embryophyta</taxon>
        <taxon>Tracheophyta</taxon>
        <taxon>Spermatophyta</taxon>
        <taxon>Magnoliopsida</taxon>
        <taxon>eudicotyledons</taxon>
        <taxon>Gunneridae</taxon>
        <taxon>Pentapetalae</taxon>
        <taxon>rosids</taxon>
        <taxon>malvids</taxon>
        <taxon>Brassicales</taxon>
        <taxon>Brassicaceae</taxon>
        <taxon>Camelineae</taxon>
        <taxon>Arabidopsis</taxon>
    </lineage>
</organism>
<dbReference type="EC" id="1.11.1.11"/>
<dbReference type="EMBL" id="AL021811">
    <property type="protein sequence ID" value="CAA16959.1"/>
    <property type="status" value="ALT_SEQ"/>
    <property type="molecule type" value="Genomic_DNA"/>
</dbReference>
<dbReference type="EMBL" id="AL034567">
    <property type="protein sequence ID" value="CAA22559.1"/>
    <property type="status" value="ALT_SEQ"/>
    <property type="molecule type" value="Genomic_DNA"/>
</dbReference>
<dbReference type="EMBL" id="AL161581">
    <property type="protein sequence ID" value="CAB79949.1"/>
    <property type="status" value="ALT_SEQ"/>
    <property type="molecule type" value="Genomic_DNA"/>
</dbReference>
<dbReference type="EMBL" id="CP002687">
    <property type="protein sequence ID" value="AEE86039.1"/>
    <property type="molecule type" value="Genomic_DNA"/>
</dbReference>
<dbReference type="EMBL" id="AK117784">
    <property type="protein sequence ID" value="BAC42431.1"/>
    <property type="molecule type" value="mRNA"/>
</dbReference>
<dbReference type="EMBL" id="BT008349">
    <property type="protein sequence ID" value="AAP37708.1"/>
    <property type="molecule type" value="mRNA"/>
</dbReference>
<dbReference type="PIR" id="T05342">
    <property type="entry name" value="T05342"/>
</dbReference>
<dbReference type="RefSeq" id="NP_194958.2">
    <property type="nucleotide sequence ID" value="NM_119384.4"/>
</dbReference>
<dbReference type="SMR" id="Q8GY91"/>
<dbReference type="BioGRID" id="14652">
    <property type="interactions" value="1"/>
</dbReference>
<dbReference type="FunCoup" id="Q8GY91">
    <property type="interactions" value="580"/>
</dbReference>
<dbReference type="STRING" id="3702.Q8GY91"/>
<dbReference type="PeroxiBase" id="3952">
    <property type="entry name" value="AtAPx-R"/>
</dbReference>
<dbReference type="GlyGen" id="Q8GY91">
    <property type="glycosylation" value="1 site"/>
</dbReference>
<dbReference type="iPTMnet" id="Q8GY91"/>
<dbReference type="PaxDb" id="3702-AT4G32320.1"/>
<dbReference type="ProteomicsDB" id="246493"/>
<dbReference type="EnsemblPlants" id="AT4G32320.1">
    <property type="protein sequence ID" value="AT4G32320.1"/>
    <property type="gene ID" value="AT4G32320"/>
</dbReference>
<dbReference type="GeneID" id="829366"/>
<dbReference type="Gramene" id="AT4G32320.1">
    <property type="protein sequence ID" value="AT4G32320.1"/>
    <property type="gene ID" value="AT4G32320"/>
</dbReference>
<dbReference type="KEGG" id="ath:AT4G32320"/>
<dbReference type="Araport" id="AT4G32320"/>
<dbReference type="TAIR" id="AT4G32320">
    <property type="gene designation" value="APX6"/>
</dbReference>
<dbReference type="eggNOG" id="ENOG502QU9K">
    <property type="taxonomic scope" value="Eukaryota"/>
</dbReference>
<dbReference type="HOGENOM" id="CLU_036959_4_0_1"/>
<dbReference type="InParanoid" id="Q8GY91"/>
<dbReference type="OMA" id="ECFKRKG"/>
<dbReference type="OrthoDB" id="2859658at2759"/>
<dbReference type="PhylomeDB" id="Q8GY91"/>
<dbReference type="BioCyc" id="ARA:AT4G32320-MONOMER"/>
<dbReference type="PRO" id="PR:Q8GY91"/>
<dbReference type="Proteomes" id="UP000006548">
    <property type="component" value="Chromosome 4"/>
</dbReference>
<dbReference type="ExpressionAtlas" id="Q8GY91">
    <property type="expression patterns" value="baseline and differential"/>
</dbReference>
<dbReference type="GO" id="GO:0005829">
    <property type="term" value="C:cytosol"/>
    <property type="evidence" value="ECO:0000304"/>
    <property type="project" value="TAIR"/>
</dbReference>
<dbReference type="GO" id="GO:0020037">
    <property type="term" value="F:heme binding"/>
    <property type="evidence" value="ECO:0007669"/>
    <property type="project" value="InterPro"/>
</dbReference>
<dbReference type="GO" id="GO:0016688">
    <property type="term" value="F:L-ascorbate peroxidase activity"/>
    <property type="evidence" value="ECO:0007669"/>
    <property type="project" value="UniProtKB-EC"/>
</dbReference>
<dbReference type="GO" id="GO:0046872">
    <property type="term" value="F:metal ion binding"/>
    <property type="evidence" value="ECO:0007669"/>
    <property type="project" value="UniProtKB-KW"/>
</dbReference>
<dbReference type="GO" id="GO:0004601">
    <property type="term" value="F:peroxidase activity"/>
    <property type="evidence" value="ECO:0000314"/>
    <property type="project" value="TAIR"/>
</dbReference>
<dbReference type="GO" id="GO:0034599">
    <property type="term" value="P:cellular response to oxidative stress"/>
    <property type="evidence" value="ECO:0007669"/>
    <property type="project" value="InterPro"/>
</dbReference>
<dbReference type="GO" id="GO:0042744">
    <property type="term" value="P:hydrogen peroxide catabolic process"/>
    <property type="evidence" value="ECO:0007669"/>
    <property type="project" value="UniProtKB-KW"/>
</dbReference>
<dbReference type="GO" id="GO:0009845">
    <property type="term" value="P:seed germination"/>
    <property type="evidence" value="ECO:0000315"/>
    <property type="project" value="TAIR"/>
</dbReference>
<dbReference type="GO" id="GO:0010431">
    <property type="term" value="P:seed maturation"/>
    <property type="evidence" value="ECO:0000315"/>
    <property type="project" value="TAIR"/>
</dbReference>
<dbReference type="CDD" id="cd00314">
    <property type="entry name" value="plant_peroxidase_like"/>
    <property type="match status" value="1"/>
</dbReference>
<dbReference type="FunFam" id="1.10.420.10:FF:000011">
    <property type="entry name" value="Adenylate/guanylate cyclase"/>
    <property type="match status" value="1"/>
</dbReference>
<dbReference type="FunFam" id="1.10.520.10:FF:000011">
    <property type="entry name" value="L-ascorbate peroxidase"/>
    <property type="match status" value="1"/>
</dbReference>
<dbReference type="Gene3D" id="1.10.520.10">
    <property type="match status" value="1"/>
</dbReference>
<dbReference type="Gene3D" id="1.10.420.10">
    <property type="entry name" value="Peroxidase, domain 2"/>
    <property type="match status" value="1"/>
</dbReference>
<dbReference type="InterPro" id="IPR044831">
    <property type="entry name" value="Ccp1-like"/>
</dbReference>
<dbReference type="InterPro" id="IPR002016">
    <property type="entry name" value="Haem_peroxidase"/>
</dbReference>
<dbReference type="InterPro" id="IPR010255">
    <property type="entry name" value="Haem_peroxidase_sf"/>
</dbReference>
<dbReference type="InterPro" id="IPR002207">
    <property type="entry name" value="Peroxidase_I"/>
</dbReference>
<dbReference type="InterPro" id="IPR019794">
    <property type="entry name" value="Peroxidases_AS"/>
</dbReference>
<dbReference type="InterPro" id="IPR019793">
    <property type="entry name" value="Peroxidases_heam-ligand_BS"/>
</dbReference>
<dbReference type="PANTHER" id="PTHR31356:SF8">
    <property type="entry name" value="L-ASCORBATE PEROXIDASE 6-RELATED"/>
    <property type="match status" value="1"/>
</dbReference>
<dbReference type="PANTHER" id="PTHR31356">
    <property type="entry name" value="THYLAKOID LUMENAL 29 KDA PROTEIN, CHLOROPLASTIC-RELATED"/>
    <property type="match status" value="1"/>
</dbReference>
<dbReference type="Pfam" id="PF00141">
    <property type="entry name" value="peroxidase"/>
    <property type="match status" value="1"/>
</dbReference>
<dbReference type="PRINTS" id="PR00459">
    <property type="entry name" value="ASPEROXIDASE"/>
</dbReference>
<dbReference type="PRINTS" id="PR00458">
    <property type="entry name" value="PEROXIDASE"/>
</dbReference>
<dbReference type="SUPFAM" id="SSF48113">
    <property type="entry name" value="Heme-dependent peroxidases"/>
    <property type="match status" value="1"/>
</dbReference>
<dbReference type="PROSITE" id="PS00435">
    <property type="entry name" value="PEROXIDASE_1"/>
    <property type="match status" value="1"/>
</dbReference>
<dbReference type="PROSITE" id="PS00436">
    <property type="entry name" value="PEROXIDASE_2"/>
    <property type="match status" value="1"/>
</dbReference>
<dbReference type="PROSITE" id="PS50873">
    <property type="entry name" value="PEROXIDASE_4"/>
    <property type="match status" value="1"/>
</dbReference>
<feature type="chain" id="PRO_0000261325" description="Putative L-ascorbate peroxidase 6">
    <location>
        <begin position="1"/>
        <end position="329"/>
    </location>
</feature>
<feature type="active site" description="Proton acceptor" evidence="2 3">
    <location>
        <position position="123"/>
    </location>
</feature>
<feature type="binding site" description="axial binding residue" evidence="2">
    <location>
        <position position="244"/>
    </location>
    <ligand>
        <name>heme b</name>
        <dbReference type="ChEBI" id="CHEBI:60344"/>
    </ligand>
    <ligandPart>
        <name>Fe</name>
        <dbReference type="ChEBI" id="CHEBI:18248"/>
    </ligandPart>
</feature>
<feature type="site" description="Transition state stabilizer" evidence="2">
    <location>
        <position position="119"/>
    </location>
</feature>